<sequence>MHQVVCATTNPAKIQAILQAFHEIFGEGSCHIASVAVESGVPEQPFGSEETRAGARNRVANARRLLPEADFWVAIEAGIDGDSTFSWVVIENASQRGEARSATLPLPAVILEKVREGEALGPVMSRYTGIDEIGRKEGAIGVFTAGKLTRASVYHQAVILALSPFHNAVY</sequence>
<gene>
    <name type="primary">yjjX</name>
    <name type="ordered locus">ECSE_4670</name>
</gene>
<dbReference type="EC" id="3.6.1.73" evidence="1"/>
<dbReference type="EMBL" id="AP009240">
    <property type="protein sequence ID" value="BAG80194.1"/>
    <property type="molecule type" value="Genomic_DNA"/>
</dbReference>
<dbReference type="RefSeq" id="WP_001338221.1">
    <property type="nucleotide sequence ID" value="NC_011415.1"/>
</dbReference>
<dbReference type="SMR" id="B6I6P2"/>
<dbReference type="GeneID" id="75169890"/>
<dbReference type="KEGG" id="ecy:ECSE_4670"/>
<dbReference type="HOGENOM" id="CLU_087417_1_0_6"/>
<dbReference type="Proteomes" id="UP000008199">
    <property type="component" value="Chromosome"/>
</dbReference>
<dbReference type="GO" id="GO:0103023">
    <property type="term" value="F:ITPase activity"/>
    <property type="evidence" value="ECO:0007669"/>
    <property type="project" value="UniProtKB-EC"/>
</dbReference>
<dbReference type="GO" id="GO:0046872">
    <property type="term" value="F:metal ion binding"/>
    <property type="evidence" value="ECO:0007669"/>
    <property type="project" value="UniProtKB-KW"/>
</dbReference>
<dbReference type="GO" id="GO:0000166">
    <property type="term" value="F:nucleotide binding"/>
    <property type="evidence" value="ECO:0007669"/>
    <property type="project" value="UniProtKB-KW"/>
</dbReference>
<dbReference type="GO" id="GO:0017111">
    <property type="term" value="F:ribonucleoside triphosphate phosphatase activity"/>
    <property type="evidence" value="ECO:0000250"/>
    <property type="project" value="UniProtKB"/>
</dbReference>
<dbReference type="GO" id="GO:0009117">
    <property type="term" value="P:nucleotide metabolic process"/>
    <property type="evidence" value="ECO:0007669"/>
    <property type="project" value="UniProtKB-KW"/>
</dbReference>
<dbReference type="GO" id="GO:0006772">
    <property type="term" value="P:thiamine metabolic process"/>
    <property type="evidence" value="ECO:0007669"/>
    <property type="project" value="TreeGrafter"/>
</dbReference>
<dbReference type="FunFam" id="3.90.950.10:FF:000002">
    <property type="entry name" value="Inosine/xanthosine triphosphatase"/>
    <property type="match status" value="1"/>
</dbReference>
<dbReference type="Gene3D" id="3.90.950.10">
    <property type="match status" value="1"/>
</dbReference>
<dbReference type="HAMAP" id="MF_00648">
    <property type="entry name" value="Non_canon_purine_NTPase_YjjX"/>
    <property type="match status" value="1"/>
</dbReference>
<dbReference type="InterPro" id="IPR029001">
    <property type="entry name" value="ITPase-like_fam"/>
</dbReference>
<dbReference type="InterPro" id="IPR002786">
    <property type="entry name" value="Non_canon_purine_NTPase"/>
</dbReference>
<dbReference type="InterPro" id="IPR026533">
    <property type="entry name" value="NTPase/PRRC1"/>
</dbReference>
<dbReference type="InterPro" id="IPR050299">
    <property type="entry name" value="YjjX_NTPase"/>
</dbReference>
<dbReference type="NCBIfam" id="TIGR00258">
    <property type="entry name" value="inosine/xanthosine triphosphatase"/>
    <property type="match status" value="1"/>
</dbReference>
<dbReference type="NCBIfam" id="NF003459">
    <property type="entry name" value="PRK05074.1"/>
    <property type="match status" value="1"/>
</dbReference>
<dbReference type="PANTHER" id="PTHR34699">
    <property type="match status" value="1"/>
</dbReference>
<dbReference type="PANTHER" id="PTHR34699:SF2">
    <property type="entry name" value="NON-CANONICAL PURINE NTP PHOSPHATASE_PRRC1 DOMAIN-CONTAINING PROTEIN"/>
    <property type="match status" value="1"/>
</dbReference>
<dbReference type="Pfam" id="PF01931">
    <property type="entry name" value="NTPase_I-T"/>
    <property type="match status" value="1"/>
</dbReference>
<dbReference type="SUPFAM" id="SSF52972">
    <property type="entry name" value="ITPase-like"/>
    <property type="match status" value="1"/>
</dbReference>
<feature type="chain" id="PRO_1000130937" description="Inosine/xanthosine triphosphatase">
    <location>
        <begin position="1"/>
        <end position="170"/>
    </location>
</feature>
<feature type="binding site" evidence="1">
    <location>
        <begin position="8"/>
        <end position="13"/>
    </location>
    <ligand>
        <name>substrate</name>
    </ligand>
</feature>
<feature type="binding site" evidence="1">
    <location>
        <position position="38"/>
    </location>
    <ligand>
        <name>Mg(2+)</name>
        <dbReference type="ChEBI" id="CHEBI:18420"/>
    </ligand>
</feature>
<feature type="binding site" evidence="1">
    <location>
        <begin position="68"/>
        <end position="69"/>
    </location>
    <ligand>
        <name>substrate</name>
    </ligand>
</feature>
<feature type="binding site" evidence="1">
    <location>
        <position position="68"/>
    </location>
    <ligand>
        <name>Mg(2+)</name>
        <dbReference type="ChEBI" id="CHEBI:18420"/>
    </ligand>
</feature>
<protein>
    <recommendedName>
        <fullName evidence="1">Inosine/xanthosine triphosphatase</fullName>
        <shortName evidence="1">ITPase/XTPase</shortName>
        <ecNumber evidence="1">3.6.1.73</ecNumber>
    </recommendedName>
    <alternativeName>
        <fullName evidence="1">Non-canonical purine NTP phosphatase</fullName>
    </alternativeName>
    <alternativeName>
        <fullName evidence="1">Non-standard purine NTP phosphatase</fullName>
    </alternativeName>
    <alternativeName>
        <fullName evidence="1">Nucleoside-triphosphate phosphatase</fullName>
        <shortName evidence="1">NTPase</shortName>
    </alternativeName>
</protein>
<keyword id="KW-0378">Hydrolase</keyword>
<keyword id="KW-0460">Magnesium</keyword>
<keyword id="KW-0464">Manganese</keyword>
<keyword id="KW-0479">Metal-binding</keyword>
<keyword id="KW-0546">Nucleotide metabolism</keyword>
<keyword id="KW-0547">Nucleotide-binding</keyword>
<proteinExistence type="inferred from homology"/>
<organism>
    <name type="scientific">Escherichia coli (strain SE11)</name>
    <dbReference type="NCBI Taxonomy" id="409438"/>
    <lineage>
        <taxon>Bacteria</taxon>
        <taxon>Pseudomonadati</taxon>
        <taxon>Pseudomonadota</taxon>
        <taxon>Gammaproteobacteria</taxon>
        <taxon>Enterobacterales</taxon>
        <taxon>Enterobacteriaceae</taxon>
        <taxon>Escherichia</taxon>
    </lineage>
</organism>
<reference key="1">
    <citation type="journal article" date="2008" name="DNA Res.">
        <title>Complete genome sequence and comparative analysis of the wild-type commensal Escherichia coli strain SE11 isolated from a healthy adult.</title>
        <authorList>
            <person name="Oshima K."/>
            <person name="Toh H."/>
            <person name="Ogura Y."/>
            <person name="Sasamoto H."/>
            <person name="Morita H."/>
            <person name="Park S.-H."/>
            <person name="Ooka T."/>
            <person name="Iyoda S."/>
            <person name="Taylor T.D."/>
            <person name="Hayashi T."/>
            <person name="Itoh K."/>
            <person name="Hattori M."/>
        </authorList>
    </citation>
    <scope>NUCLEOTIDE SEQUENCE [LARGE SCALE GENOMIC DNA]</scope>
    <source>
        <strain>SE11</strain>
    </source>
</reference>
<accession>B6I6P2</accession>
<evidence type="ECO:0000255" key="1">
    <source>
        <dbReference type="HAMAP-Rule" id="MF_00648"/>
    </source>
</evidence>
<name>NCPP_ECOSE</name>
<comment type="function">
    <text evidence="1">Phosphatase that hydrolyzes non-canonical purine nucleotides such as XTP and ITP to their respective diphosphate derivatives. Probably excludes non-canonical purines from DNA/RNA precursor pool, thus preventing their incorporation into DNA/RNA and avoiding chromosomal lesions.</text>
</comment>
<comment type="catalytic activity">
    <reaction evidence="1">
        <text>XTP + H2O = XDP + phosphate + H(+)</text>
        <dbReference type="Rhea" id="RHEA:28406"/>
        <dbReference type="ChEBI" id="CHEBI:15377"/>
        <dbReference type="ChEBI" id="CHEBI:15378"/>
        <dbReference type="ChEBI" id="CHEBI:43474"/>
        <dbReference type="ChEBI" id="CHEBI:59884"/>
        <dbReference type="ChEBI" id="CHEBI:61314"/>
        <dbReference type="EC" id="3.6.1.73"/>
    </reaction>
</comment>
<comment type="catalytic activity">
    <reaction evidence="1">
        <text>ITP + H2O = IDP + phosphate + H(+)</text>
        <dbReference type="Rhea" id="RHEA:28330"/>
        <dbReference type="ChEBI" id="CHEBI:15377"/>
        <dbReference type="ChEBI" id="CHEBI:15378"/>
        <dbReference type="ChEBI" id="CHEBI:43474"/>
        <dbReference type="ChEBI" id="CHEBI:58280"/>
        <dbReference type="ChEBI" id="CHEBI:61402"/>
        <dbReference type="EC" id="3.6.1.73"/>
    </reaction>
</comment>
<comment type="cofactor">
    <cofactor evidence="1">
        <name>Mg(2+)</name>
        <dbReference type="ChEBI" id="CHEBI:18420"/>
    </cofactor>
    <cofactor evidence="1">
        <name>Mn(2+)</name>
        <dbReference type="ChEBI" id="CHEBI:29035"/>
    </cofactor>
    <text evidence="1">Binds 1 divalent metal cation per subunit; can use either Mg(2+) or Mn(2+).</text>
</comment>
<comment type="subunit">
    <text evidence="1">Homodimer.</text>
</comment>
<comment type="similarity">
    <text evidence="1">Belongs to the YjjX NTPase family.</text>
</comment>